<sequence length="100" mass="11755">MAKKSMLMRESKRAKLVEKYRQRRNELKQLIKSSDDFQVIMESQAKLAKLPVNSNPVRYVTRCKQCGRPHAVYRKFNLCRICLRQQLMVGNIPGGRKSSW</sequence>
<evidence type="ECO:0000250" key="1"/>
<evidence type="ECO:0000255" key="2"/>
<evidence type="ECO:0000305" key="3"/>
<keyword id="KW-0479">Metal-binding</keyword>
<keyword id="KW-1185">Reference proteome</keyword>
<keyword id="KW-0687">Ribonucleoprotein</keyword>
<keyword id="KW-0689">Ribosomal protein</keyword>
<keyword id="KW-0694">RNA-binding</keyword>
<keyword id="KW-0699">rRNA-binding</keyword>
<keyword id="KW-0862">Zinc</keyword>
<gene>
    <name type="primary">rpsN</name>
    <name type="synonym">rpsZ</name>
    <name type="ordered locus">lpg0342</name>
</gene>
<accession>Q5ZYN0</accession>
<protein>
    <recommendedName>
        <fullName evidence="3">Small ribosomal subunit protein uS14</fullName>
    </recommendedName>
    <alternativeName>
        <fullName>30S ribosomal protein S14</fullName>
    </alternativeName>
</protein>
<organism>
    <name type="scientific">Legionella pneumophila subsp. pneumophila (strain Philadelphia 1 / ATCC 33152 / DSM 7513)</name>
    <dbReference type="NCBI Taxonomy" id="272624"/>
    <lineage>
        <taxon>Bacteria</taxon>
        <taxon>Pseudomonadati</taxon>
        <taxon>Pseudomonadota</taxon>
        <taxon>Gammaproteobacteria</taxon>
        <taxon>Legionellales</taxon>
        <taxon>Legionellaceae</taxon>
        <taxon>Legionella</taxon>
    </lineage>
</organism>
<reference key="1">
    <citation type="journal article" date="2004" name="Science">
        <title>The genomic sequence of the accidental pathogen Legionella pneumophila.</title>
        <authorList>
            <person name="Chien M."/>
            <person name="Morozova I."/>
            <person name="Shi S."/>
            <person name="Sheng H."/>
            <person name="Chen J."/>
            <person name="Gomez S.M."/>
            <person name="Asamani G."/>
            <person name="Hill K."/>
            <person name="Nuara J."/>
            <person name="Feder M."/>
            <person name="Rineer J."/>
            <person name="Greenberg J.J."/>
            <person name="Steshenko V."/>
            <person name="Park S.H."/>
            <person name="Zhao B."/>
            <person name="Teplitskaya E."/>
            <person name="Edwards J.R."/>
            <person name="Pampou S."/>
            <person name="Georghiou A."/>
            <person name="Chou I.-C."/>
            <person name="Iannuccilli W."/>
            <person name="Ulz M.E."/>
            <person name="Kim D.H."/>
            <person name="Geringer-Sameth A."/>
            <person name="Goldsberry C."/>
            <person name="Morozov P."/>
            <person name="Fischer S.G."/>
            <person name="Segal G."/>
            <person name="Qu X."/>
            <person name="Rzhetsky A."/>
            <person name="Zhang P."/>
            <person name="Cayanis E."/>
            <person name="De Jong P.J."/>
            <person name="Ju J."/>
            <person name="Kalachikov S."/>
            <person name="Shuman H.A."/>
            <person name="Russo J.J."/>
        </authorList>
    </citation>
    <scope>NUCLEOTIDE SEQUENCE [LARGE SCALE GENOMIC DNA]</scope>
    <source>
        <strain>Philadelphia 1 / ATCC 33152 / DSM 7513</strain>
    </source>
</reference>
<comment type="function">
    <text evidence="1">Binds 16S rRNA, required for the assembly of 30S particles and may also be responsible for determining the conformation of the 16S rRNA at the A site.</text>
</comment>
<comment type="cofactor">
    <cofactor evidence="3">
        <name>Zn(2+)</name>
        <dbReference type="ChEBI" id="CHEBI:29105"/>
    </cofactor>
    <text evidence="3">Binds 1 zinc ion per subunit.</text>
</comment>
<comment type="subunit">
    <text evidence="1">Part of the 30S ribosomal subunit. Contacts proteins S3 and S10 (By similarity).</text>
</comment>
<comment type="similarity">
    <text evidence="3">Belongs to the universal ribosomal protein uS14 family.</text>
</comment>
<comment type="caution">
    <text evidence="3">This protein has the conserved residues necessary to bind a zinc ion as do the zinc-binding member of this family, but it is not clear if does so.</text>
</comment>
<comment type="sequence caution" evidence="3">
    <conflict type="erroneous initiation">
        <sequence resource="EMBL-CDS" id="AAU26439"/>
    </conflict>
    <text>Truncated N-terminus.</text>
</comment>
<dbReference type="EMBL" id="AE017354">
    <property type="protein sequence ID" value="AAU26439.1"/>
    <property type="status" value="ALT_INIT"/>
    <property type="molecule type" value="Genomic_DNA"/>
</dbReference>
<dbReference type="RefSeq" id="WP_010946091.1">
    <property type="nucleotide sequence ID" value="NC_002942.5"/>
</dbReference>
<dbReference type="RefSeq" id="YP_094386.2">
    <property type="nucleotide sequence ID" value="NC_002942.5"/>
</dbReference>
<dbReference type="SMR" id="Q5ZYN0"/>
<dbReference type="STRING" id="272624.lpg0342"/>
<dbReference type="PaxDb" id="272624-lpg0342"/>
<dbReference type="GeneID" id="57034345"/>
<dbReference type="KEGG" id="lpn:lpg0342"/>
<dbReference type="PATRIC" id="fig|272624.6.peg.349"/>
<dbReference type="eggNOG" id="COG0199">
    <property type="taxonomic scope" value="Bacteria"/>
</dbReference>
<dbReference type="HOGENOM" id="CLU_139869_0_0_6"/>
<dbReference type="OrthoDB" id="9810484at2"/>
<dbReference type="Proteomes" id="UP000000609">
    <property type="component" value="Chromosome"/>
</dbReference>
<dbReference type="GO" id="GO:0005737">
    <property type="term" value="C:cytoplasm"/>
    <property type="evidence" value="ECO:0007669"/>
    <property type="project" value="UniProtKB-ARBA"/>
</dbReference>
<dbReference type="GO" id="GO:0015935">
    <property type="term" value="C:small ribosomal subunit"/>
    <property type="evidence" value="ECO:0007669"/>
    <property type="project" value="TreeGrafter"/>
</dbReference>
<dbReference type="GO" id="GO:0046872">
    <property type="term" value="F:metal ion binding"/>
    <property type="evidence" value="ECO:0007669"/>
    <property type="project" value="UniProtKB-KW"/>
</dbReference>
<dbReference type="GO" id="GO:0019843">
    <property type="term" value="F:rRNA binding"/>
    <property type="evidence" value="ECO:0007669"/>
    <property type="project" value="UniProtKB-UniRule"/>
</dbReference>
<dbReference type="GO" id="GO:0003735">
    <property type="term" value="F:structural constituent of ribosome"/>
    <property type="evidence" value="ECO:0007669"/>
    <property type="project" value="InterPro"/>
</dbReference>
<dbReference type="GO" id="GO:0006412">
    <property type="term" value="P:translation"/>
    <property type="evidence" value="ECO:0007669"/>
    <property type="project" value="UniProtKB-UniRule"/>
</dbReference>
<dbReference type="FunFam" id="1.10.287.1480:FF:000001">
    <property type="entry name" value="30S ribosomal protein S14"/>
    <property type="match status" value="1"/>
</dbReference>
<dbReference type="Gene3D" id="1.10.287.1480">
    <property type="match status" value="1"/>
</dbReference>
<dbReference type="InterPro" id="IPR001209">
    <property type="entry name" value="Ribosomal_uS14"/>
</dbReference>
<dbReference type="InterPro" id="IPR023036">
    <property type="entry name" value="Ribosomal_uS14_bac/plastid"/>
</dbReference>
<dbReference type="InterPro" id="IPR018271">
    <property type="entry name" value="Ribosomal_uS14_CS"/>
</dbReference>
<dbReference type="NCBIfam" id="NF005370">
    <property type="entry name" value="PRK06911.1"/>
    <property type="match status" value="1"/>
</dbReference>
<dbReference type="NCBIfam" id="NF006477">
    <property type="entry name" value="PRK08881.1"/>
    <property type="match status" value="1"/>
</dbReference>
<dbReference type="PANTHER" id="PTHR19836">
    <property type="entry name" value="30S RIBOSOMAL PROTEIN S14"/>
    <property type="match status" value="1"/>
</dbReference>
<dbReference type="PANTHER" id="PTHR19836:SF19">
    <property type="entry name" value="SMALL RIBOSOMAL SUBUNIT PROTEIN US14M"/>
    <property type="match status" value="1"/>
</dbReference>
<dbReference type="Pfam" id="PF00253">
    <property type="entry name" value="Ribosomal_S14"/>
    <property type="match status" value="1"/>
</dbReference>
<dbReference type="SUPFAM" id="SSF57716">
    <property type="entry name" value="Glucocorticoid receptor-like (DNA-binding domain)"/>
    <property type="match status" value="1"/>
</dbReference>
<dbReference type="PROSITE" id="PS00527">
    <property type="entry name" value="RIBOSOMAL_S14"/>
    <property type="match status" value="1"/>
</dbReference>
<feature type="chain" id="PRO_0000269112" description="Small ribosomal subunit protein uS14">
    <location>
        <begin position="1"/>
        <end position="100"/>
    </location>
</feature>
<feature type="binding site" evidence="2">
    <location>
        <position position="63"/>
    </location>
    <ligand>
        <name>Zn(2+)</name>
        <dbReference type="ChEBI" id="CHEBI:29105"/>
    </ligand>
</feature>
<feature type="binding site" evidence="2">
    <location>
        <position position="66"/>
    </location>
    <ligand>
        <name>Zn(2+)</name>
        <dbReference type="ChEBI" id="CHEBI:29105"/>
    </ligand>
</feature>
<feature type="binding site" evidence="2">
    <location>
        <position position="79"/>
    </location>
    <ligand>
        <name>Zn(2+)</name>
        <dbReference type="ChEBI" id="CHEBI:29105"/>
    </ligand>
</feature>
<feature type="binding site" evidence="2">
    <location>
        <position position="82"/>
    </location>
    <ligand>
        <name>Zn(2+)</name>
        <dbReference type="ChEBI" id="CHEBI:29105"/>
    </ligand>
</feature>
<proteinExistence type="inferred from homology"/>
<name>RS14_LEGPH</name>